<protein>
    <recommendedName>
        <fullName evidence="1">cGMP-dependent protein kinase egl-4</fullName>
        <ecNumber evidence="1">2.7.11.12</ecNumber>
    </recommendedName>
    <alternativeName>
        <fullName evidence="1">Egg-laying defective protein 4</fullName>
    </alternativeName>
</protein>
<dbReference type="EC" id="2.7.11.12" evidence="1"/>
<dbReference type="EMBL" id="HE601100">
    <property type="protein sequence ID" value="CAP28232.2"/>
    <property type="molecule type" value="Genomic_DNA"/>
</dbReference>
<dbReference type="SMR" id="A8X6H1"/>
<dbReference type="FunCoup" id="A8X6H1">
    <property type="interactions" value="456"/>
</dbReference>
<dbReference type="STRING" id="6238.A8X6H1"/>
<dbReference type="EnsemblMetazoa" id="CBG08401a.1">
    <property type="protein sequence ID" value="CBG08401a.1"/>
    <property type="gene ID" value="WBGene00030199"/>
</dbReference>
<dbReference type="WormBase" id="CBG08401a">
    <property type="protein sequence ID" value="CBP30576"/>
    <property type="gene ID" value="WBGene00030199"/>
    <property type="gene designation" value="Cbr-egl-4"/>
</dbReference>
<dbReference type="eggNOG" id="KOG0614">
    <property type="taxonomic scope" value="Eukaryota"/>
</dbReference>
<dbReference type="HOGENOM" id="CLU_000288_73_2_1"/>
<dbReference type="InParanoid" id="A8X6H1"/>
<dbReference type="OMA" id="CDLNEPP"/>
<dbReference type="Proteomes" id="UP000008549">
    <property type="component" value="Unassembled WGS sequence"/>
</dbReference>
<dbReference type="GO" id="GO:0005737">
    <property type="term" value="C:cytoplasm"/>
    <property type="evidence" value="ECO:0007669"/>
    <property type="project" value="UniProtKB-SubCell"/>
</dbReference>
<dbReference type="GO" id="GO:0005634">
    <property type="term" value="C:nucleus"/>
    <property type="evidence" value="ECO:0007669"/>
    <property type="project" value="UniProtKB-SubCell"/>
</dbReference>
<dbReference type="GO" id="GO:0005524">
    <property type="term" value="F:ATP binding"/>
    <property type="evidence" value="ECO:0007669"/>
    <property type="project" value="UniProtKB-KW"/>
</dbReference>
<dbReference type="GO" id="GO:0030553">
    <property type="term" value="F:cGMP binding"/>
    <property type="evidence" value="ECO:0007669"/>
    <property type="project" value="UniProtKB-KW"/>
</dbReference>
<dbReference type="GO" id="GO:0004692">
    <property type="term" value="F:cGMP-dependent protein kinase activity"/>
    <property type="evidence" value="ECO:0007669"/>
    <property type="project" value="UniProtKB-EC"/>
</dbReference>
<dbReference type="GO" id="GO:0046872">
    <property type="term" value="F:metal ion binding"/>
    <property type="evidence" value="ECO:0007669"/>
    <property type="project" value="UniProtKB-KW"/>
</dbReference>
<dbReference type="GO" id="GO:0106310">
    <property type="term" value="F:protein serine kinase activity"/>
    <property type="evidence" value="ECO:0007669"/>
    <property type="project" value="RHEA"/>
</dbReference>
<dbReference type="GO" id="GO:0006935">
    <property type="term" value="P:chemotaxis"/>
    <property type="evidence" value="ECO:0007669"/>
    <property type="project" value="UniProtKB-KW"/>
</dbReference>
<dbReference type="GO" id="GO:0007168">
    <property type="term" value="P:receptor guanylyl cyclase signaling pathway"/>
    <property type="evidence" value="ECO:0000318"/>
    <property type="project" value="GO_Central"/>
</dbReference>
<dbReference type="CDD" id="cd00038">
    <property type="entry name" value="CAP_ED"/>
    <property type="match status" value="2"/>
</dbReference>
<dbReference type="CDD" id="cd05572">
    <property type="entry name" value="STKc_cGK"/>
    <property type="match status" value="1"/>
</dbReference>
<dbReference type="FunFam" id="1.10.510.10:FF:000096">
    <property type="entry name" value="cGMP-dependent protein kinase"/>
    <property type="match status" value="1"/>
</dbReference>
<dbReference type="FunFam" id="2.60.120.10:FF:000072">
    <property type="entry name" value="cGMP-dependent protein kinase"/>
    <property type="match status" value="1"/>
</dbReference>
<dbReference type="FunFam" id="2.60.120.10:FF:000064">
    <property type="entry name" value="cGMP-dependent protein kinase, isozyme"/>
    <property type="match status" value="1"/>
</dbReference>
<dbReference type="Gene3D" id="2.60.120.10">
    <property type="entry name" value="Jelly Rolls"/>
    <property type="match status" value="2"/>
</dbReference>
<dbReference type="Gene3D" id="3.30.200.20">
    <property type="entry name" value="Phosphorylase Kinase, domain 1"/>
    <property type="match status" value="1"/>
</dbReference>
<dbReference type="Gene3D" id="1.10.510.10">
    <property type="entry name" value="Transferase(Phosphotransferase) domain 1"/>
    <property type="match status" value="1"/>
</dbReference>
<dbReference type="InterPro" id="IPR000961">
    <property type="entry name" value="AGC-kinase_C"/>
</dbReference>
<dbReference type="InterPro" id="IPR002374">
    <property type="entry name" value="cGMP_dep_kinase"/>
</dbReference>
<dbReference type="InterPro" id="IPR018488">
    <property type="entry name" value="cNMP-bd_CS"/>
</dbReference>
<dbReference type="InterPro" id="IPR000595">
    <property type="entry name" value="cNMP-bd_dom"/>
</dbReference>
<dbReference type="InterPro" id="IPR018490">
    <property type="entry name" value="cNMP-bd_dom_sf"/>
</dbReference>
<dbReference type="InterPro" id="IPR011009">
    <property type="entry name" value="Kinase-like_dom_sf"/>
</dbReference>
<dbReference type="InterPro" id="IPR000719">
    <property type="entry name" value="Prot_kinase_dom"/>
</dbReference>
<dbReference type="InterPro" id="IPR017441">
    <property type="entry name" value="Protein_kinase_ATP_BS"/>
</dbReference>
<dbReference type="InterPro" id="IPR014710">
    <property type="entry name" value="RmlC-like_jellyroll"/>
</dbReference>
<dbReference type="InterPro" id="IPR008271">
    <property type="entry name" value="Ser/Thr_kinase_AS"/>
</dbReference>
<dbReference type="InterPro" id="IPR035014">
    <property type="entry name" value="STKc_cGK"/>
</dbReference>
<dbReference type="PANTHER" id="PTHR24353:SF111">
    <property type="match status" value="1"/>
</dbReference>
<dbReference type="PANTHER" id="PTHR24353">
    <property type="entry name" value="CYCLIC NUCLEOTIDE-DEPENDENT PROTEIN KINASE"/>
    <property type="match status" value="1"/>
</dbReference>
<dbReference type="Pfam" id="PF00027">
    <property type="entry name" value="cNMP_binding"/>
    <property type="match status" value="2"/>
</dbReference>
<dbReference type="Pfam" id="PF00069">
    <property type="entry name" value="Pkinase"/>
    <property type="match status" value="1"/>
</dbReference>
<dbReference type="PIRSF" id="PIRSF000559">
    <property type="entry name" value="cGMP-dep_kinase"/>
    <property type="match status" value="1"/>
</dbReference>
<dbReference type="PRINTS" id="PR00104">
    <property type="entry name" value="CGMPKINASE"/>
</dbReference>
<dbReference type="SMART" id="SM00100">
    <property type="entry name" value="cNMP"/>
    <property type="match status" value="2"/>
</dbReference>
<dbReference type="SMART" id="SM00133">
    <property type="entry name" value="S_TK_X"/>
    <property type="match status" value="1"/>
</dbReference>
<dbReference type="SMART" id="SM00220">
    <property type="entry name" value="S_TKc"/>
    <property type="match status" value="1"/>
</dbReference>
<dbReference type="SUPFAM" id="SSF51206">
    <property type="entry name" value="cAMP-binding domain-like"/>
    <property type="match status" value="2"/>
</dbReference>
<dbReference type="SUPFAM" id="SSF56112">
    <property type="entry name" value="Protein kinase-like (PK-like)"/>
    <property type="match status" value="1"/>
</dbReference>
<dbReference type="PROSITE" id="PS51285">
    <property type="entry name" value="AGC_KINASE_CTER"/>
    <property type="match status" value="1"/>
</dbReference>
<dbReference type="PROSITE" id="PS00888">
    <property type="entry name" value="CNMP_BINDING_1"/>
    <property type="match status" value="1"/>
</dbReference>
<dbReference type="PROSITE" id="PS00889">
    <property type="entry name" value="CNMP_BINDING_2"/>
    <property type="match status" value="2"/>
</dbReference>
<dbReference type="PROSITE" id="PS50042">
    <property type="entry name" value="CNMP_BINDING_3"/>
    <property type="match status" value="2"/>
</dbReference>
<dbReference type="PROSITE" id="PS00107">
    <property type="entry name" value="PROTEIN_KINASE_ATP"/>
    <property type="match status" value="1"/>
</dbReference>
<dbReference type="PROSITE" id="PS50011">
    <property type="entry name" value="PROTEIN_KINASE_DOM"/>
    <property type="match status" value="1"/>
</dbReference>
<dbReference type="PROSITE" id="PS00108">
    <property type="entry name" value="PROTEIN_KINASE_ST"/>
    <property type="match status" value="1"/>
</dbReference>
<name>EGL4_CAEBR</name>
<proteinExistence type="inferred from homology"/>
<gene>
    <name evidence="9" type="primary">egl-4</name>
    <name evidence="10" type="ORF">CBG08401</name>
</gene>
<reference evidence="9" key="1">
    <citation type="journal article" date="2003" name="PLoS Biol.">
        <title>The genome sequence of Caenorhabditis briggsae: a platform for comparative genomics.</title>
        <authorList>
            <person name="Stein L.D."/>
            <person name="Bao Z."/>
            <person name="Blasiar D."/>
            <person name="Blumenthal T."/>
            <person name="Brent M.R."/>
            <person name="Chen N."/>
            <person name="Chinwalla A."/>
            <person name="Clarke L."/>
            <person name="Clee C."/>
            <person name="Coghlan A."/>
            <person name="Coulson A."/>
            <person name="D'Eustachio P."/>
            <person name="Fitch D.H.A."/>
            <person name="Fulton L.A."/>
            <person name="Fulton R.E."/>
            <person name="Griffiths-Jones S."/>
            <person name="Harris T.W."/>
            <person name="Hillier L.W."/>
            <person name="Kamath R."/>
            <person name="Kuwabara P.E."/>
            <person name="Mardis E.R."/>
            <person name="Marra M.A."/>
            <person name="Miner T.L."/>
            <person name="Minx P."/>
            <person name="Mullikin J.C."/>
            <person name="Plumb R.W."/>
            <person name="Rogers J."/>
            <person name="Schein J.E."/>
            <person name="Sohrmann M."/>
            <person name="Spieth J."/>
            <person name="Stajich J.E."/>
            <person name="Wei C."/>
            <person name="Willey D."/>
            <person name="Wilson R.K."/>
            <person name="Durbin R.M."/>
            <person name="Waterston R.H."/>
        </authorList>
    </citation>
    <scope>NUCLEOTIDE SEQUENCE [LARGE SCALE GENOMIC DNA]</scope>
    <source>
        <strain evidence="9">AF16</strain>
    </source>
</reference>
<evidence type="ECO:0000250" key="1">
    <source>
        <dbReference type="UniProtKB" id="O76360"/>
    </source>
</evidence>
<evidence type="ECO:0000250" key="2">
    <source>
        <dbReference type="UniProtKB" id="P28523"/>
    </source>
</evidence>
<evidence type="ECO:0000250" key="3">
    <source>
        <dbReference type="UniProtKB" id="Q13976"/>
    </source>
</evidence>
<evidence type="ECO:0000255" key="4"/>
<evidence type="ECO:0000255" key="5">
    <source>
        <dbReference type="PROSITE-ProRule" id="PRU00159"/>
    </source>
</evidence>
<evidence type="ECO:0000255" key="6">
    <source>
        <dbReference type="PROSITE-ProRule" id="PRU00618"/>
    </source>
</evidence>
<evidence type="ECO:0000255" key="7">
    <source>
        <dbReference type="PROSITE-ProRule" id="PRU10027"/>
    </source>
</evidence>
<evidence type="ECO:0000256" key="8">
    <source>
        <dbReference type="SAM" id="MobiDB-lite"/>
    </source>
</evidence>
<evidence type="ECO:0000312" key="9">
    <source>
        <dbReference type="EMBL" id="CAP28232.2"/>
    </source>
</evidence>
<evidence type="ECO:0000312" key="10">
    <source>
        <dbReference type="WormBase" id="CBG08401a"/>
    </source>
</evidence>
<feature type="chain" id="PRO_0000390490" description="cGMP-dependent protein kinase egl-4">
    <location>
        <begin position="1"/>
        <end position="749"/>
    </location>
</feature>
<feature type="domain" description="Protein kinase" evidence="5">
    <location>
        <begin position="438"/>
        <end position="698"/>
    </location>
</feature>
<feature type="domain" description="AGC-kinase C-terminal" evidence="6">
    <location>
        <begin position="699"/>
        <end position="749"/>
    </location>
</feature>
<feature type="region of interest" description="Disordered" evidence="8">
    <location>
        <begin position="87"/>
        <end position="111"/>
    </location>
</feature>
<feature type="region of interest" description="Disordered" evidence="8">
    <location>
        <begin position="723"/>
        <end position="749"/>
    </location>
</feature>
<feature type="coiled-coil region" evidence="4">
    <location>
        <begin position="30"/>
        <end position="96"/>
    </location>
</feature>
<feature type="short sequence motif" description="Nuclear localization signal" evidence="4">
    <location>
        <begin position="461"/>
        <end position="473"/>
    </location>
</feature>
<feature type="active site" description="Proton acceptor" evidence="2 5 7">
    <location>
        <position position="562"/>
    </location>
</feature>
<feature type="binding site" evidence="3">
    <location>
        <begin position="234"/>
        <end position="237"/>
    </location>
    <ligand>
        <name>3',5'-cyclic GMP</name>
        <dbReference type="ChEBI" id="CHEBI:57746"/>
        <label>1</label>
    </ligand>
</feature>
<feature type="binding site" evidence="3">
    <location>
        <begin position="244"/>
        <end position="245"/>
    </location>
    <ligand>
        <name>3',5'-cyclic GMP</name>
        <dbReference type="ChEBI" id="CHEBI:57746"/>
        <label>1</label>
    </ligand>
</feature>
<feature type="binding site" evidence="3">
    <location>
        <position position="349"/>
    </location>
    <ligand>
        <name>3',5'-cyclic GMP</name>
        <dbReference type="ChEBI" id="CHEBI:57746"/>
        <label>2</label>
    </ligand>
</feature>
<feature type="binding site" evidence="3">
    <location>
        <begin position="358"/>
        <end position="361"/>
    </location>
    <ligand>
        <name>3',5'-cyclic GMP</name>
        <dbReference type="ChEBI" id="CHEBI:57746"/>
        <label>2</label>
    </ligand>
</feature>
<feature type="binding site" evidence="3">
    <location>
        <begin position="368"/>
        <end position="369"/>
    </location>
    <ligand>
        <name>3',5'-cyclic GMP</name>
        <dbReference type="ChEBI" id="CHEBI:57746"/>
        <label>2</label>
    </ligand>
</feature>
<feature type="binding site" evidence="3">
    <location>
        <position position="403"/>
    </location>
    <ligand>
        <name>3',5'-cyclic GMP</name>
        <dbReference type="ChEBI" id="CHEBI:57746"/>
        <label>2</label>
    </ligand>
</feature>
<feature type="binding site" evidence="2 5">
    <location>
        <begin position="444"/>
        <end position="452"/>
    </location>
    <ligand>
        <name>ATP</name>
        <dbReference type="ChEBI" id="CHEBI:30616"/>
    </ligand>
</feature>
<feature type="binding site" evidence="2 5">
    <location>
        <position position="468"/>
    </location>
    <ligand>
        <name>ATP</name>
        <dbReference type="ChEBI" id="CHEBI:30616"/>
    </ligand>
</feature>
<accession>A8X6H1</accession>
<comment type="function">
    <text evidence="1">Promotes chemoreceptor gene expression in response to increased cGMP levels by antagonizing the gene repression functions of the class II HDAC hda-4 and the mef-2 transcription factor. Regulates gene expression via recruitment of a histone deacetylase complex containing hda-2, saeg-1 and saeg-2. Represses body size and lifespan through the dbl-1 and insulin pathways, respectively. May also signal through daf-3 and/or daf-5. Role in egg-laying, dauer formation and motility. Regulates behavioral responses to various chemosensory stimuli in sensory neurons. Required for the initiation of long term adaptation to prolonged odor exposure which results in a decrease in odor seeking behavior. May regulate this process by phosphorylating tax-2, a subunit of cyclic nucleotide-gated channel tax-2/tax-4. In ASH sensory neurons, negatively regulates avoidance behavior to some bitter tastants, such as quinine, probably by phosphorylating rgs-2 and rgs-3 which are 2 regulator of G-protein signaling proteins. In AWB sensory neurons, involved in avoidance behavior to some repellent odors. In ASE left (ASEL) sensory neuron, involved in the sensing of environmental alkalinity downstream of receptor-type guanylate cyclase gcy-14. In sensory neurons, involved in the signaling pathway downstream of insulin, TGF-beta and receptor-type guanylate cyclase responsible for inducing quiescence after food intake. Might play a role in aversive olfactory learning in AWC neurons when an odor is associated with food deprivation, depending on the ins-1/age-1 signal from the AIA to the AWC neurons. Probably by regulating neuronal transmission downstream of lin-3 and receptor lin-23 and phospholipase plc-3 in ALA neurons, involved in the decrease in locomotion during the quiescent state that precedes each larval molt.</text>
</comment>
<comment type="catalytic activity">
    <reaction evidence="1">
        <text>L-seryl-[protein] + ATP = O-phospho-L-seryl-[protein] + ADP + H(+)</text>
        <dbReference type="Rhea" id="RHEA:17989"/>
        <dbReference type="Rhea" id="RHEA-COMP:9863"/>
        <dbReference type="Rhea" id="RHEA-COMP:11604"/>
        <dbReference type="ChEBI" id="CHEBI:15378"/>
        <dbReference type="ChEBI" id="CHEBI:29999"/>
        <dbReference type="ChEBI" id="CHEBI:30616"/>
        <dbReference type="ChEBI" id="CHEBI:83421"/>
        <dbReference type="ChEBI" id="CHEBI:456216"/>
        <dbReference type="EC" id="2.7.11.12"/>
    </reaction>
</comment>
<comment type="catalytic activity">
    <reaction evidence="1">
        <text>L-threonyl-[protein] + ATP = O-phospho-L-threonyl-[protein] + ADP + H(+)</text>
        <dbReference type="Rhea" id="RHEA:46608"/>
        <dbReference type="Rhea" id="RHEA-COMP:11060"/>
        <dbReference type="Rhea" id="RHEA-COMP:11605"/>
        <dbReference type="ChEBI" id="CHEBI:15378"/>
        <dbReference type="ChEBI" id="CHEBI:30013"/>
        <dbReference type="ChEBI" id="CHEBI:30616"/>
        <dbReference type="ChEBI" id="CHEBI:61977"/>
        <dbReference type="ChEBI" id="CHEBI:456216"/>
        <dbReference type="EC" id="2.7.11.12"/>
    </reaction>
</comment>
<comment type="cofactor">
    <cofactor evidence="1">
        <name>Mg(2+)</name>
        <dbReference type="ChEBI" id="CHEBI:18420"/>
    </cofactor>
</comment>
<comment type="activity regulation">
    <text evidence="1">Binding of cGMP results in enzyme activation.</text>
</comment>
<comment type="subcellular location">
    <subcellularLocation>
        <location evidence="1">Cytoplasm</location>
    </subcellularLocation>
    <subcellularLocation>
        <location evidence="1">Nucleus</location>
    </subcellularLocation>
    <text evidence="1">In resting AWC sensory neurons, localizes in cytoplasm. Prolonged exposure to attractive odorants sensed by AWC neurons results in nuclear translocation. Nuclear translocation is required for the adaptation to prolonged odor exposure and is controlled by G(o)-alpha subunit protein goa-1. Localization is regulated by cGMP levels: high cGMP levels result in cytoplasmic localization whereas low cGMP levels result in nuclear localization. Nuclear localization in AWC neurons is dependent on age-1. In addition, an intact sensory cilia structure is required for cytoplasmic localization in resting AWC neurons. In resting AWB sensory neurons, constitutive nuclear localization is dependent on goa-1. In resting ASH sensory neurons, localizes in both cytoplasm and nucleus. Cytoplasmic localization is important for negative regulation of quinine sensitivity in ASH neurons.</text>
</comment>
<comment type="PTM">
    <text evidence="1">Autophosphorylated.</text>
</comment>
<comment type="similarity">
    <text evidence="4">Belongs to the protein kinase superfamily. AGC Ser/Thr protein kinase family. cGMP subfamily.</text>
</comment>
<organism>
    <name type="scientific">Caenorhabditis briggsae</name>
    <dbReference type="NCBI Taxonomy" id="6238"/>
    <lineage>
        <taxon>Eukaryota</taxon>
        <taxon>Metazoa</taxon>
        <taxon>Ecdysozoa</taxon>
        <taxon>Nematoda</taxon>
        <taxon>Chromadorea</taxon>
        <taxon>Rhabditida</taxon>
        <taxon>Rhabditina</taxon>
        <taxon>Rhabditomorpha</taxon>
        <taxon>Rhabditoidea</taxon>
        <taxon>Rhabditidae</taxon>
        <taxon>Peloderinae</taxon>
        <taxon>Caenorhabditis</taxon>
    </lineage>
</organism>
<sequence length="749" mass="84587">MYGSSRHHLDSFSSNDGNAFLVQVGSRTFEAHELQKLIPQLEEAISRKDAQLRQQQSIVEGHIKRISELEGEVTTLQRECDKLRSVLEQKAQSAASPGQPPSPSPRTDQLGNDLQQKAVFPADGTQQRAKKIAVSAEPTNFENKPATLQHYNKTVAAKQMIRDAVQKNDFLKQLAKEQIIELVNCMYEMRARAGQWVIQEGEPGDRLFVVAEGELQVSREGATLGKMRAGTVMGELAILYNCTRTASVQALTDVQLWVLDRSVFQMITQRLGMERHSQIINFLSKVSIFANLTEDRISKIADVMDQDYYDGGHYILRQGEKGDAFFVINSGQVKVTQQIEGEKEAREIRILNQGDFFGERALLGDEVRTANIIAQAPGVEVLTLDRESFTKLIGDLDTLRKDYGDKERVATLVREPPSPVKIVDDFREEFANVTLKNVKRLATLGVGGFGRVELVCVNGDKSKTYALKALKKKHIVDTRQQEHIFAERNIMMETSTDWIVKLYKTFRDQKFVYMLLEVCLGGELWTTLRDRGHFDDYTARFYVACVLEGLEYLHRKNIVYRDLKPENCLLANSGYLKLVDFGFAKKLASGRKTWTFCGTPEYVSPEIILNKGHDQAADYWALGIYICELMLGRPPFQASDPMKTYTLILKGVDALEIPNRRIGKTATALVKKLCRDNPGERLGSGSGGVNDIRKHRWFMGFDWEGLRTKTLKPPILPKVNNPADVTNFDNYPPDNDVPPDEFSGWDEGF</sequence>
<keyword id="KW-0067">ATP-binding</keyword>
<keyword id="KW-0140">cGMP</keyword>
<keyword id="KW-0142">cGMP-binding</keyword>
<keyword id="KW-0145">Chemotaxis</keyword>
<keyword id="KW-0175">Coiled coil</keyword>
<keyword id="KW-0963">Cytoplasm</keyword>
<keyword id="KW-0217">Developmental protein</keyword>
<keyword id="KW-0418">Kinase</keyword>
<keyword id="KW-0460">Magnesium</keyword>
<keyword id="KW-0479">Metal-binding</keyword>
<keyword id="KW-0547">Nucleotide-binding</keyword>
<keyword id="KW-0539">Nucleus</keyword>
<keyword id="KW-1185">Reference proteome</keyword>
<keyword id="KW-0677">Repeat</keyword>
<keyword id="KW-0723">Serine/threonine-protein kinase</keyword>
<keyword id="KW-0808">Transferase</keyword>